<sequence length="420" mass="45672">MNLLVVGSGGREHAISKKLLESNNVEKVYCAPGNDGMRLDDIQLVAISETDKVGLIDFAKKADVSFVIVGPEVPLLEGVVDAFEEAGIKAFGPKANAALIEGSKDFAKQFMEKYAIPTAASRTFTDYAEAKAYLDERGVPIVIKADGLAAGKGVTVALEMEEAVLALKDMMLEEKFGDASLKVVIEDFLAGEEFSLMAFVNGEEVYPMAIAQDHKRAYEGDKGPNTGGMGAYSPVPHISEDVVNEAVEKILRPAAKGMVQEDRYFRGILYAGLILTTEGPKVIEFNARFGDPETQVVLPRLESDFAALIAALLNNEKPEVRFKKEGITLGVVLASAGYPEHYEKGNKLTGLNDIREDVAIYHAGTKQNENGEFVSSGGRVLLLAKEAETMSDARTLLYPEMQKLDNPNFFYRMDIGTKAE</sequence>
<comment type="catalytic activity">
    <reaction evidence="2">
        <text>5-phospho-beta-D-ribosylamine + glycine + ATP = N(1)-(5-phospho-beta-D-ribosyl)glycinamide + ADP + phosphate + H(+)</text>
        <dbReference type="Rhea" id="RHEA:17453"/>
        <dbReference type="ChEBI" id="CHEBI:15378"/>
        <dbReference type="ChEBI" id="CHEBI:30616"/>
        <dbReference type="ChEBI" id="CHEBI:43474"/>
        <dbReference type="ChEBI" id="CHEBI:57305"/>
        <dbReference type="ChEBI" id="CHEBI:58681"/>
        <dbReference type="ChEBI" id="CHEBI:143788"/>
        <dbReference type="ChEBI" id="CHEBI:456216"/>
        <dbReference type="EC" id="6.3.4.13"/>
    </reaction>
</comment>
<comment type="cofactor">
    <cofactor evidence="1">
        <name>Mg(2+)</name>
        <dbReference type="ChEBI" id="CHEBI:18420"/>
    </cofactor>
    <cofactor evidence="1">
        <name>Mn(2+)</name>
        <dbReference type="ChEBI" id="CHEBI:29035"/>
    </cofactor>
    <text evidence="1">Binds 1 Mg(2+) or Mn(2+) ion per subunit.</text>
</comment>
<comment type="pathway">
    <text evidence="2">Purine metabolism; IMP biosynthesis via de novo pathway; N(1)-(5-phospho-D-ribosyl)glycinamide from 5-phospho-alpha-D-ribose 1-diphosphate: step 2/2.</text>
</comment>
<comment type="similarity">
    <text evidence="2">Belongs to the GARS family.</text>
</comment>
<reference key="1">
    <citation type="journal article" date="2001" name="Science">
        <title>Comparative genomics of Listeria species.</title>
        <authorList>
            <person name="Glaser P."/>
            <person name="Frangeul L."/>
            <person name="Buchrieser C."/>
            <person name="Rusniok C."/>
            <person name="Amend A."/>
            <person name="Baquero F."/>
            <person name="Berche P."/>
            <person name="Bloecker H."/>
            <person name="Brandt P."/>
            <person name="Chakraborty T."/>
            <person name="Charbit A."/>
            <person name="Chetouani F."/>
            <person name="Couve E."/>
            <person name="de Daruvar A."/>
            <person name="Dehoux P."/>
            <person name="Domann E."/>
            <person name="Dominguez-Bernal G."/>
            <person name="Duchaud E."/>
            <person name="Durant L."/>
            <person name="Dussurget O."/>
            <person name="Entian K.-D."/>
            <person name="Fsihi H."/>
            <person name="Garcia-del Portillo F."/>
            <person name="Garrido P."/>
            <person name="Gautier L."/>
            <person name="Goebel W."/>
            <person name="Gomez-Lopez N."/>
            <person name="Hain T."/>
            <person name="Hauf J."/>
            <person name="Jackson D."/>
            <person name="Jones L.-M."/>
            <person name="Kaerst U."/>
            <person name="Kreft J."/>
            <person name="Kuhn M."/>
            <person name="Kunst F."/>
            <person name="Kurapkat G."/>
            <person name="Madueno E."/>
            <person name="Maitournam A."/>
            <person name="Mata Vicente J."/>
            <person name="Ng E."/>
            <person name="Nedjari H."/>
            <person name="Nordsiek G."/>
            <person name="Novella S."/>
            <person name="de Pablos B."/>
            <person name="Perez-Diaz J.-C."/>
            <person name="Purcell R."/>
            <person name="Remmel B."/>
            <person name="Rose M."/>
            <person name="Schlueter T."/>
            <person name="Simoes N."/>
            <person name="Tierrez A."/>
            <person name="Vazquez-Boland J.-A."/>
            <person name="Voss H."/>
            <person name="Wehland J."/>
            <person name="Cossart P."/>
        </authorList>
    </citation>
    <scope>NUCLEOTIDE SEQUENCE [LARGE SCALE GENOMIC DNA]</scope>
    <source>
        <strain>ATCC BAA-680 / CLIP 11262</strain>
    </source>
</reference>
<protein>
    <recommendedName>
        <fullName evidence="2">Phosphoribosylamine--glycine ligase</fullName>
        <ecNumber evidence="2">6.3.4.13</ecNumber>
    </recommendedName>
    <alternativeName>
        <fullName evidence="2">GARS</fullName>
    </alternativeName>
    <alternativeName>
        <fullName evidence="2">Glycinamide ribonucleotide synthetase</fullName>
    </alternativeName>
    <alternativeName>
        <fullName evidence="2">Phosphoribosylglycinamide synthetase</fullName>
    </alternativeName>
</protein>
<name>PUR2_LISIN</name>
<evidence type="ECO:0000250" key="1"/>
<evidence type="ECO:0000255" key="2">
    <source>
        <dbReference type="HAMAP-Rule" id="MF_00138"/>
    </source>
</evidence>
<organism>
    <name type="scientific">Listeria innocua serovar 6a (strain ATCC BAA-680 / CLIP 11262)</name>
    <dbReference type="NCBI Taxonomy" id="272626"/>
    <lineage>
        <taxon>Bacteria</taxon>
        <taxon>Bacillati</taxon>
        <taxon>Bacillota</taxon>
        <taxon>Bacilli</taxon>
        <taxon>Bacillales</taxon>
        <taxon>Listeriaceae</taxon>
        <taxon>Listeria</taxon>
    </lineage>
</organism>
<keyword id="KW-0067">ATP-binding</keyword>
<keyword id="KW-0436">Ligase</keyword>
<keyword id="KW-0460">Magnesium</keyword>
<keyword id="KW-0464">Manganese</keyword>
<keyword id="KW-0479">Metal-binding</keyword>
<keyword id="KW-0547">Nucleotide-binding</keyword>
<keyword id="KW-0658">Purine biosynthesis</keyword>
<gene>
    <name evidence="2" type="primary">purD</name>
    <name type="ordered locus">lin1876</name>
</gene>
<dbReference type="EC" id="6.3.4.13" evidence="2"/>
<dbReference type="EMBL" id="AL596170">
    <property type="protein sequence ID" value="CAC97106.1"/>
    <property type="molecule type" value="Genomic_DNA"/>
</dbReference>
<dbReference type="PIR" id="AB1667">
    <property type="entry name" value="AB1667"/>
</dbReference>
<dbReference type="RefSeq" id="WP_010990999.1">
    <property type="nucleotide sequence ID" value="NC_003212.1"/>
</dbReference>
<dbReference type="SMR" id="Q92AP4"/>
<dbReference type="STRING" id="272626.gene:17566231"/>
<dbReference type="GeneID" id="93235211"/>
<dbReference type="KEGG" id="lin:purD"/>
<dbReference type="eggNOG" id="COG0151">
    <property type="taxonomic scope" value="Bacteria"/>
</dbReference>
<dbReference type="HOGENOM" id="CLU_027420_3_1_9"/>
<dbReference type="OrthoDB" id="9807240at2"/>
<dbReference type="UniPathway" id="UPA00074">
    <property type="reaction ID" value="UER00125"/>
</dbReference>
<dbReference type="Proteomes" id="UP000002513">
    <property type="component" value="Chromosome"/>
</dbReference>
<dbReference type="GO" id="GO:0005524">
    <property type="term" value="F:ATP binding"/>
    <property type="evidence" value="ECO:0007669"/>
    <property type="project" value="UniProtKB-KW"/>
</dbReference>
<dbReference type="GO" id="GO:0046872">
    <property type="term" value="F:metal ion binding"/>
    <property type="evidence" value="ECO:0007669"/>
    <property type="project" value="UniProtKB-KW"/>
</dbReference>
<dbReference type="GO" id="GO:0004637">
    <property type="term" value="F:phosphoribosylamine-glycine ligase activity"/>
    <property type="evidence" value="ECO:0007669"/>
    <property type="project" value="UniProtKB-UniRule"/>
</dbReference>
<dbReference type="GO" id="GO:0006189">
    <property type="term" value="P:'de novo' IMP biosynthetic process"/>
    <property type="evidence" value="ECO:0007669"/>
    <property type="project" value="UniProtKB-UniRule"/>
</dbReference>
<dbReference type="GO" id="GO:0009113">
    <property type="term" value="P:purine nucleobase biosynthetic process"/>
    <property type="evidence" value="ECO:0007669"/>
    <property type="project" value="InterPro"/>
</dbReference>
<dbReference type="FunFam" id="3.30.1490.20:FF:000006">
    <property type="entry name" value="phosphoribosylamine--glycine ligase, chloroplastic-like"/>
    <property type="match status" value="1"/>
</dbReference>
<dbReference type="FunFam" id="3.30.470.20:FF:000018">
    <property type="entry name" value="Trifunctional purine biosynthetic protein adenosine-3"/>
    <property type="match status" value="1"/>
</dbReference>
<dbReference type="Gene3D" id="3.40.50.20">
    <property type="match status" value="1"/>
</dbReference>
<dbReference type="Gene3D" id="3.30.1490.20">
    <property type="entry name" value="ATP-grasp fold, A domain"/>
    <property type="match status" value="1"/>
</dbReference>
<dbReference type="Gene3D" id="3.30.470.20">
    <property type="entry name" value="ATP-grasp fold, B domain"/>
    <property type="match status" value="1"/>
</dbReference>
<dbReference type="Gene3D" id="3.90.600.10">
    <property type="entry name" value="Phosphoribosylglycinamide synthetase, C-terminal domain"/>
    <property type="match status" value="1"/>
</dbReference>
<dbReference type="HAMAP" id="MF_00138">
    <property type="entry name" value="GARS"/>
    <property type="match status" value="1"/>
</dbReference>
<dbReference type="InterPro" id="IPR011761">
    <property type="entry name" value="ATP-grasp"/>
</dbReference>
<dbReference type="InterPro" id="IPR013815">
    <property type="entry name" value="ATP_grasp_subdomain_1"/>
</dbReference>
<dbReference type="InterPro" id="IPR016185">
    <property type="entry name" value="PreATP-grasp_dom_sf"/>
</dbReference>
<dbReference type="InterPro" id="IPR020561">
    <property type="entry name" value="PRibGlycinamid_synth_ATP-grasp"/>
</dbReference>
<dbReference type="InterPro" id="IPR000115">
    <property type="entry name" value="PRibGlycinamide_synth"/>
</dbReference>
<dbReference type="InterPro" id="IPR020560">
    <property type="entry name" value="PRibGlycinamide_synth_C-dom"/>
</dbReference>
<dbReference type="InterPro" id="IPR037123">
    <property type="entry name" value="PRibGlycinamide_synth_C_sf"/>
</dbReference>
<dbReference type="InterPro" id="IPR020559">
    <property type="entry name" value="PRibGlycinamide_synth_CS"/>
</dbReference>
<dbReference type="InterPro" id="IPR020562">
    <property type="entry name" value="PRibGlycinamide_synth_N"/>
</dbReference>
<dbReference type="InterPro" id="IPR011054">
    <property type="entry name" value="Rudment_hybrid_motif"/>
</dbReference>
<dbReference type="NCBIfam" id="TIGR00877">
    <property type="entry name" value="purD"/>
    <property type="match status" value="1"/>
</dbReference>
<dbReference type="PANTHER" id="PTHR43472">
    <property type="entry name" value="PHOSPHORIBOSYLAMINE--GLYCINE LIGASE"/>
    <property type="match status" value="1"/>
</dbReference>
<dbReference type="PANTHER" id="PTHR43472:SF1">
    <property type="entry name" value="PHOSPHORIBOSYLAMINE--GLYCINE LIGASE, CHLOROPLASTIC"/>
    <property type="match status" value="1"/>
</dbReference>
<dbReference type="Pfam" id="PF01071">
    <property type="entry name" value="GARS_A"/>
    <property type="match status" value="1"/>
</dbReference>
<dbReference type="Pfam" id="PF02843">
    <property type="entry name" value="GARS_C"/>
    <property type="match status" value="1"/>
</dbReference>
<dbReference type="Pfam" id="PF02844">
    <property type="entry name" value="GARS_N"/>
    <property type="match status" value="1"/>
</dbReference>
<dbReference type="SMART" id="SM01209">
    <property type="entry name" value="GARS_A"/>
    <property type="match status" value="1"/>
</dbReference>
<dbReference type="SMART" id="SM01210">
    <property type="entry name" value="GARS_C"/>
    <property type="match status" value="1"/>
</dbReference>
<dbReference type="SUPFAM" id="SSF56059">
    <property type="entry name" value="Glutathione synthetase ATP-binding domain-like"/>
    <property type="match status" value="1"/>
</dbReference>
<dbReference type="SUPFAM" id="SSF52440">
    <property type="entry name" value="PreATP-grasp domain"/>
    <property type="match status" value="1"/>
</dbReference>
<dbReference type="SUPFAM" id="SSF51246">
    <property type="entry name" value="Rudiment single hybrid motif"/>
    <property type="match status" value="1"/>
</dbReference>
<dbReference type="PROSITE" id="PS50975">
    <property type="entry name" value="ATP_GRASP"/>
    <property type="match status" value="1"/>
</dbReference>
<dbReference type="PROSITE" id="PS00184">
    <property type="entry name" value="GARS"/>
    <property type="match status" value="1"/>
</dbReference>
<proteinExistence type="inferred from homology"/>
<feature type="chain" id="PRO_0000151460" description="Phosphoribosylamine--glycine ligase">
    <location>
        <begin position="1"/>
        <end position="420"/>
    </location>
</feature>
<feature type="domain" description="ATP-grasp" evidence="2">
    <location>
        <begin position="108"/>
        <end position="314"/>
    </location>
</feature>
<feature type="binding site" evidence="2">
    <location>
        <begin position="134"/>
        <end position="195"/>
    </location>
    <ligand>
        <name>ATP</name>
        <dbReference type="ChEBI" id="CHEBI:30616"/>
    </ligand>
</feature>
<feature type="binding site" evidence="2">
    <location>
        <position position="284"/>
    </location>
    <ligand>
        <name>Mg(2+)</name>
        <dbReference type="ChEBI" id="CHEBI:18420"/>
    </ligand>
</feature>
<feature type="binding site" evidence="2">
    <location>
        <position position="286"/>
    </location>
    <ligand>
        <name>Mg(2+)</name>
        <dbReference type="ChEBI" id="CHEBI:18420"/>
    </ligand>
</feature>
<accession>Q92AP4</accession>